<organism>
    <name type="scientific">Monascus ruber</name>
    <name type="common">Mold</name>
    <dbReference type="NCBI Taxonomy" id="89489"/>
    <lineage>
        <taxon>Eukaryota</taxon>
        <taxon>Fungi</taxon>
        <taxon>Dikarya</taxon>
        <taxon>Ascomycota</taxon>
        <taxon>Pezizomycotina</taxon>
        <taxon>Eurotiomycetes</taxon>
        <taxon>Eurotiomycetidae</taxon>
        <taxon>Eurotiales</taxon>
        <taxon>Aspergillaceae</taxon>
        <taxon>Monascus</taxon>
    </lineage>
</organism>
<feature type="chain" id="PRO_0000460216" description="FAD-dependent monooxygenase pigN">
    <location>
        <begin position="1"/>
        <end position="436"/>
    </location>
</feature>
<feature type="active site" evidence="2">
    <location>
        <position position="200"/>
    </location>
</feature>
<feature type="binding site" evidence="2">
    <location>
        <position position="40"/>
    </location>
    <ligand>
        <name>FAD</name>
        <dbReference type="ChEBI" id="CHEBI:57692"/>
    </ligand>
</feature>
<feature type="binding site" evidence="2">
    <location>
        <position position="53"/>
    </location>
    <ligand>
        <name>FAD</name>
        <dbReference type="ChEBI" id="CHEBI:57692"/>
    </ligand>
</feature>
<feature type="binding site" evidence="2">
    <location>
        <position position="118"/>
    </location>
    <ligand>
        <name>FAD</name>
        <dbReference type="ChEBI" id="CHEBI:57692"/>
    </ligand>
</feature>
<feature type="binding site" evidence="2">
    <location>
        <position position="316"/>
    </location>
    <ligand>
        <name>FAD</name>
        <dbReference type="ChEBI" id="CHEBI:57692"/>
    </ligand>
</feature>
<feature type="binding site" evidence="2">
    <location>
        <position position="329"/>
    </location>
    <ligand>
        <name>FAD</name>
        <dbReference type="ChEBI" id="CHEBI:57692"/>
    </ligand>
</feature>
<comment type="function">
    <text evidence="8 9 10">FAD-dependent monooxygenase; part of the gene cluster that mediates the biosynthesis of azaphilone pigments (MonAzPs), a complex mixture of compounds with a common azaphilone skeleton very widely used as food colorants (PubMed:26946170, PubMed:28959415, PubMed:34220766). Within the pathway, pigN hydroxylates the benzaldehyde M7PKS-1 intermediate at C-4 to form the pyran ring (PubMed:28959415). The first step of the pathway is performed by the nrPKS pigA that forms the hexaketide precursor from successive condensations of five malonyl-CoA units, with a simple acetyl-CoA starter unit. The role of esterase pigG is not clear, but it may play at most a supplementary role in the formation of the benzaldehyde produced by the pigA nrPKS. This very reactive benzaldehyde is intercepted by the pigC ketoreductase that to provide the first stable enzyme-free MonAzPs intermediate, 6-(4-hydroxy-2-oxopentyl)-3-methyl-2,4-dioxocyclohexane carbaldehyde, also known as M7PKS-1. The FAD-dependent monooxygenase pigN hydroxylates M7PKS-1 at C-4, which triggers the formation of the pyran ring. PigJ, pigK and pigD are involved in the acetylation of the pyran ring. PigJ and pigK form the two subunits of a dedicated fungal FAS that produces the side chain fatty acyl moiety of MonAzPs and pigD transfers the fatty acyl chain to the C-4 alcohol. PigM and pigO are involved in the elimination of the omega-1 alcohol. PigM acts as an O-acetyltransferase that synthesizes the putative O-11 acetyl intermediate whereas pigO eliminates acetic acid to yield an intermediate with a C10(11) double bond. The dehydration of the C-11 alcohol followed by the reduction of the C6(7) double bond by the NAD(P)H-dependent oxidoreductase pigE increases the electrophilicity of the C-5 ketone of the resulting acyl benzopyran. This in turn sets up the C-5 ketone for an intramolecular Knoevenagel aldol condensation with the C-20 enol of the side chain. This condensation affords the characteristic linear tricyclic carbon skeletons of the yellow pigments that serve as the common precursors for the classical yellow pigments monascin and ankaflavin, orange pigments rubopunctatin and monascorubrin, and red pigments ribropunctamine and monascorubramine. The FAD-dependent oxidoreductase pigF is especially invoved in the biosynthesis of orange and red pigments via desaturation of C6(7) (PubMed:28959415).</text>
</comment>
<comment type="cofactor">
    <cofactor evidence="1">
        <name>FAD</name>
        <dbReference type="ChEBI" id="CHEBI:57692"/>
    </cofactor>
</comment>
<comment type="pathway">
    <text evidence="8 9">Secondary metabolite biosynthesis.</text>
</comment>
<comment type="induction">
    <text evidence="10">Expression is positively regulated by the azaphilone pigments (MonAzPs) gene cluster-specific transcription regulator pigB.</text>
</comment>
<comment type="disruption phenotype">
    <text evidence="9">Impairs the production of azaphilone pigments (MonAzPs) but accumulates the benzaldehyde 6-(4-hydroxy-2-oxopentyl)-3-methyl-2,4-dioxocyclohexane carbaldehyde, also known as M7PKS-1.</text>
</comment>
<comment type="biotechnology">
    <text evidence="3 4 5 6 7 11">As colorants, MonAzPs are widely used in various food products for centuries (PubMed:37087240). Moreover, MonAzPs also possess wide-ranging biological activities such as antibacterial activity, preventing hypertension, lowering cholesterol levels, causing hypolipidemic effects, and displaying antiobesity and antitumor activities (PubMed:16283302, PubMed:16660141, PubMed:17191930, PubMed:20666456, PubMed:22562164).</text>
</comment>
<comment type="similarity">
    <text evidence="13">Belongs to the paxM FAD-dependent monooxygenase family.</text>
</comment>
<accession>A0A0U2JT37</accession>
<name>PIGN_MONRU</name>
<reference key="1">
    <citation type="submission" date="2015-09" db="EMBL/GenBank/DDBJ databases">
        <authorList>
            <person name="Jackson K.R."/>
            <person name="Lunt B.L."/>
            <person name="Fisher J.N.B."/>
            <person name="Gardner A.V."/>
            <person name="Bailey M.E."/>
            <person name="Deus L.M."/>
            <person name="Earl A.S."/>
            <person name="Gibby P.D."/>
            <person name="Hartmann K.A."/>
            <person name="Liu J.E."/>
            <person name="Manci A.M."/>
            <person name="Nielsen D.A."/>
            <person name="Solomon M.B."/>
            <person name="Breakwell D.P."/>
            <person name="Burnett S.H."/>
            <person name="Grose J.H."/>
        </authorList>
    </citation>
    <scope>NUCLEOTIDE SEQUENCE [MRNA]</scope>
    <source>
        <strain>M7</strain>
    </source>
</reference>
<reference key="2">
    <citation type="journal article" date="1977" name="Plant Physiol.">
        <title>Pigmentation and antibacterial activity of fast neutron- and X-ray-induced strains of Monascus purpureus went.</title>
        <authorList>
            <person name="Wong H.C."/>
            <person name="Bau Y.S."/>
        </authorList>
    </citation>
    <scope>BIOTECHNOLOGY</scope>
</reference>
<reference key="3">
    <citation type="journal article" date="2005" name="Chem. Biodivers.">
        <title>Anti-tumor-initiating effects of monascin, an azaphilonoid pigment from the extract of Monascus pilosus fermented rice (red-mold rice).</title>
        <authorList>
            <person name="Akihisa T."/>
            <person name="Tokuda H."/>
            <person name="Ukiya M."/>
            <person name="Kiyota A."/>
            <person name="Yasukawa K."/>
            <person name="Sakamoto N."/>
            <person name="Kimura Y."/>
            <person name="Suzuki T."/>
            <person name="Takayasu J."/>
            <person name="Nishino H."/>
        </authorList>
    </citation>
    <scope>BIOTECHNOLOGY</scope>
</reference>
<reference key="4">
    <citation type="journal article" date="2006" name="Appl. Microbiol. Biotechnol.">
        <title>In vivo hypolipidemic effects and safety of low dosage Monascus powder in a hamster model of hyperlipidemia.</title>
        <authorList>
            <person name="Lee C.L."/>
            <person name="Tsai T.Y."/>
            <person name="Wang J.J."/>
            <person name="Pan T.M."/>
        </authorList>
    </citation>
    <scope>BIOTECHNOLOGY</scope>
</reference>
<reference key="5">
    <citation type="journal article" date="2010" name="J. Agric. Food Chem.">
        <title>Monascin and ankaflavin act as novel hypolipidemic and high-density lipoprotein cholesterol-raising agents in red mold dioscorea.</title>
        <authorList>
            <person name="Lee C.L."/>
            <person name="Kung Y.H."/>
            <person name="Wu C.L."/>
            <person name="Hsu Y.W."/>
            <person name="Pan T.M."/>
        </authorList>
    </citation>
    <scope>BIOTECHNOLOGY</scope>
</reference>
<reference key="6">
    <citation type="journal article" date="2012" name="Appl. Microbiol. Biotechnol.">
        <title>Development of Monascus fermentation technology for high hypolipidemic effect.</title>
        <authorList>
            <person name="Lee C.L."/>
            <person name="Pan T.M."/>
        </authorList>
    </citation>
    <scope>BIOTECHNOLOGY</scope>
</reference>
<reference key="7">
    <citation type="journal article" date="2016" name="Appl. Microbiol. Biotechnol.">
        <title>Identification and role analysis of an intermediate produced by a polygenic mutant of Monascus pigments cluster in Monascus ruber M7.</title>
        <authorList>
            <person name="Liu J."/>
            <person name="Zhou Y."/>
            <person name="Yi T."/>
            <person name="Zhao M."/>
            <person name="Xie N."/>
            <person name="Lei M."/>
            <person name="Liu Q."/>
            <person name="Shao Y."/>
            <person name="Chen F."/>
        </authorList>
    </citation>
    <scope>FUNCTION</scope>
    <scope>PATHWAY</scope>
</reference>
<reference key="8">
    <citation type="journal article" date="2017" name="Chem. Sci.">
        <title>Orange, red, yellow: biosynthesis of azaphilone pigments in Monascus fungi.</title>
        <authorList>
            <person name="Chen W."/>
            <person name="Chen R."/>
            <person name="Liu Q."/>
            <person name="He Y."/>
            <person name="He K."/>
            <person name="Ding X."/>
            <person name="Kang L."/>
            <person name="Guo X."/>
            <person name="Xie N."/>
            <person name="Zhou Y."/>
            <person name="Lu Y."/>
            <person name="Cox R.J."/>
            <person name="Molnar I."/>
            <person name="Li M."/>
            <person name="Shao Y."/>
            <person name="Chen F."/>
        </authorList>
    </citation>
    <scope>FUNCTION</scope>
    <scope>DISRUPTION PHENOTYPE</scope>
    <scope>CATALYTIC ACTIVITY</scope>
    <scope>PATHWAY</scope>
</reference>
<reference key="9">
    <citation type="journal article" date="2021" name="Front. Microbiol.">
        <title>An integrated approach to determine the boundaries of the azaphilone pigment biosynthetic gene cluster of Monascus ruber M7 gown on potato dextrose agar.</title>
        <authorList>
            <person name="Liu Q."/>
            <person name="Zhong S."/>
            <person name="Wang X."/>
            <person name="Gao S."/>
            <person name="Yang X."/>
            <person name="Chen F."/>
            <person name="Molnar I."/>
        </authorList>
    </citation>
    <scope>FUNCTION</scope>
    <scope>INDUCTION</scope>
</reference>
<reference key="10">
    <citation type="journal article" date="2023" name="Food Res. Intern.">
        <title>Improved natural food colorant production in the filamentous fungus Monascus ruber using CRISPR-based engineering.</title>
        <authorList>
            <person name="Ree Yoon H."/>
            <person name="Han S."/>
            <person name="Chul Shin S."/>
            <person name="Cheong Yeom S."/>
            <person name="Jin Kim H."/>
        </authorList>
    </citation>
    <scope>BIOTECHNOLOGY</scope>
</reference>
<dbReference type="EC" id="1.-.-.-" evidence="9"/>
<dbReference type="EMBL" id="KT862837">
    <property type="protein sequence ID" value="ALT31754.1"/>
    <property type="molecule type" value="mRNA"/>
</dbReference>
<dbReference type="SMR" id="A0A0U2JT37"/>
<dbReference type="GO" id="GO:0071949">
    <property type="term" value="F:FAD binding"/>
    <property type="evidence" value="ECO:0007669"/>
    <property type="project" value="InterPro"/>
</dbReference>
<dbReference type="GO" id="GO:0050172">
    <property type="term" value="F:phenylalanine 2-monooxygenase activity"/>
    <property type="evidence" value="ECO:0007669"/>
    <property type="project" value="UniProtKB-EC"/>
</dbReference>
<dbReference type="GO" id="GO:0031409">
    <property type="term" value="F:pigment binding"/>
    <property type="evidence" value="ECO:0007669"/>
    <property type="project" value="UniProtKB-KW"/>
</dbReference>
<dbReference type="GO" id="GO:0044550">
    <property type="term" value="P:secondary metabolite biosynthetic process"/>
    <property type="evidence" value="ECO:0007669"/>
    <property type="project" value="TreeGrafter"/>
</dbReference>
<dbReference type="FunFam" id="3.50.50.60:FF:000153">
    <property type="entry name" value="Salicylate hydroxylase, putative"/>
    <property type="match status" value="1"/>
</dbReference>
<dbReference type="Gene3D" id="3.50.50.60">
    <property type="entry name" value="FAD/NAD(P)-binding domain"/>
    <property type="match status" value="1"/>
</dbReference>
<dbReference type="InterPro" id="IPR002938">
    <property type="entry name" value="FAD-bd"/>
</dbReference>
<dbReference type="InterPro" id="IPR036188">
    <property type="entry name" value="FAD/NAD-bd_sf"/>
</dbReference>
<dbReference type="InterPro" id="IPR051104">
    <property type="entry name" value="FAD_monoxygenase"/>
</dbReference>
<dbReference type="PANTHER" id="PTHR46720:SF3">
    <property type="entry name" value="FAD-BINDING DOMAIN-CONTAINING PROTEIN-RELATED"/>
    <property type="match status" value="1"/>
</dbReference>
<dbReference type="PANTHER" id="PTHR46720">
    <property type="entry name" value="HYDROXYLASE, PUTATIVE (AFU_ORTHOLOGUE AFUA_3G01460)-RELATED"/>
    <property type="match status" value="1"/>
</dbReference>
<dbReference type="Pfam" id="PF01494">
    <property type="entry name" value="FAD_binding_3"/>
    <property type="match status" value="1"/>
</dbReference>
<dbReference type="PRINTS" id="PR00420">
    <property type="entry name" value="RNGMNOXGNASE"/>
</dbReference>
<dbReference type="SUPFAM" id="SSF54373">
    <property type="entry name" value="FAD-linked reductases, C-terminal domain"/>
    <property type="match status" value="1"/>
</dbReference>
<dbReference type="SUPFAM" id="SSF51905">
    <property type="entry name" value="FAD/NAD(P)-binding domain"/>
    <property type="match status" value="1"/>
</dbReference>
<sequence length="436" mass="48307">MPGVTKEEPQLDLAIIGGGITGLSLAAGLLSRNIHVTIYERARQFREIGAGIGFTPNAERSMIALDPRVHAAFKNVATPNETDLFRWVDGYTHYSDERYEELLFETDLGKRGFEGCHRAQFLDELVKLIPEKNVRLGKTLRRVTEKVDGEKLLLEFEDGSTAEADAVIGCDGIRSRVRQLILGEDNPASYPRYSHKSAFRGLVPMDRAVDAMGREKALTRHMHLGQDAHVLTFPVAMGKLLNVVAFVTDPGEWPHEEKLSAPASKEEAVQAFSGFGHVVRAVMDLLPDTLDRWAVFDTYDHPASTYVRGRMCIAGDAAHASSPHHGAGAGTGIEDAAVLAAVLAAASETASSLAKTKAEALRAALATYDAIRLERSQWVVQSSRILGELYEWQYEPTGRDAAKCGAEVYWRSHQIWDYDVDDMLRRTAEDYRRRLE</sequence>
<keyword id="KW-0274">FAD</keyword>
<keyword id="KW-0285">Flavoprotein</keyword>
<keyword id="KW-0503">Monooxygenase</keyword>
<keyword id="KW-0560">Oxidoreductase</keyword>
<keyword id="KW-0608">Pigment</keyword>
<evidence type="ECO:0000250" key="1">
    <source>
        <dbReference type="UniProtKB" id="A6T923"/>
    </source>
</evidence>
<evidence type="ECO:0000250" key="2">
    <source>
        <dbReference type="UniProtKB" id="B8M9J8"/>
    </source>
</evidence>
<evidence type="ECO:0000269" key="3">
    <source>
    </source>
</evidence>
<evidence type="ECO:0000269" key="4">
    <source>
    </source>
</evidence>
<evidence type="ECO:0000269" key="5">
    <source>
    </source>
</evidence>
<evidence type="ECO:0000269" key="6">
    <source>
    </source>
</evidence>
<evidence type="ECO:0000269" key="7">
    <source>
    </source>
</evidence>
<evidence type="ECO:0000269" key="8">
    <source>
    </source>
</evidence>
<evidence type="ECO:0000269" key="9">
    <source>
    </source>
</evidence>
<evidence type="ECO:0000269" key="10">
    <source>
    </source>
</evidence>
<evidence type="ECO:0000269" key="11">
    <source>
    </source>
</evidence>
<evidence type="ECO:0000303" key="12">
    <source>
    </source>
</evidence>
<evidence type="ECO:0000305" key="13"/>
<gene>
    <name evidence="12" type="primary">pigN</name>
</gene>
<proteinExistence type="evidence at protein level"/>
<protein>
    <recommendedName>
        <fullName evidence="12">FAD-dependent monooxygenase pigN</fullName>
        <ecNumber evidence="9">1.-.-.-</ecNumber>
    </recommendedName>
    <alternativeName>
        <fullName evidence="12">Azaphilone pigments biosynthesis cluster protein N</fullName>
    </alternativeName>
</protein>